<dbReference type="EC" id="4.4.1.21" evidence="1"/>
<dbReference type="EMBL" id="FM204883">
    <property type="protein sequence ID" value="CAW94898.1"/>
    <property type="molecule type" value="Genomic_DNA"/>
</dbReference>
<dbReference type="RefSeq" id="WP_012680002.1">
    <property type="nucleotide sequence ID" value="NC_012471.1"/>
</dbReference>
<dbReference type="SMR" id="C0M785"/>
<dbReference type="KEGG" id="seu:SEQ_1782"/>
<dbReference type="HOGENOM" id="CLU_107531_2_1_9"/>
<dbReference type="OrthoDB" id="9788129at2"/>
<dbReference type="Proteomes" id="UP000001365">
    <property type="component" value="Chromosome"/>
</dbReference>
<dbReference type="GO" id="GO:0005506">
    <property type="term" value="F:iron ion binding"/>
    <property type="evidence" value="ECO:0007669"/>
    <property type="project" value="InterPro"/>
</dbReference>
<dbReference type="GO" id="GO:0043768">
    <property type="term" value="F:S-ribosylhomocysteine lyase activity"/>
    <property type="evidence" value="ECO:0007669"/>
    <property type="project" value="UniProtKB-UniRule"/>
</dbReference>
<dbReference type="GO" id="GO:0009372">
    <property type="term" value="P:quorum sensing"/>
    <property type="evidence" value="ECO:0007669"/>
    <property type="project" value="UniProtKB-UniRule"/>
</dbReference>
<dbReference type="Gene3D" id="3.30.1360.80">
    <property type="entry name" value="S-ribosylhomocysteinase (LuxS)"/>
    <property type="match status" value="1"/>
</dbReference>
<dbReference type="HAMAP" id="MF_00091">
    <property type="entry name" value="LuxS"/>
    <property type="match status" value="1"/>
</dbReference>
<dbReference type="InterPro" id="IPR037005">
    <property type="entry name" value="LuxS_sf"/>
</dbReference>
<dbReference type="InterPro" id="IPR011249">
    <property type="entry name" value="Metalloenz_LuxS/M16"/>
</dbReference>
<dbReference type="InterPro" id="IPR003815">
    <property type="entry name" value="S-ribosylhomocysteinase"/>
</dbReference>
<dbReference type="NCBIfam" id="NF002607">
    <property type="entry name" value="PRK02260.2-5"/>
    <property type="match status" value="1"/>
</dbReference>
<dbReference type="NCBIfam" id="NF002608">
    <property type="entry name" value="PRK02260.3-1"/>
    <property type="match status" value="1"/>
</dbReference>
<dbReference type="PANTHER" id="PTHR35799">
    <property type="entry name" value="S-RIBOSYLHOMOCYSTEINE LYASE"/>
    <property type="match status" value="1"/>
</dbReference>
<dbReference type="PANTHER" id="PTHR35799:SF1">
    <property type="entry name" value="S-RIBOSYLHOMOCYSTEINE LYASE"/>
    <property type="match status" value="1"/>
</dbReference>
<dbReference type="Pfam" id="PF02664">
    <property type="entry name" value="LuxS"/>
    <property type="match status" value="1"/>
</dbReference>
<dbReference type="PIRSF" id="PIRSF006160">
    <property type="entry name" value="AI2"/>
    <property type="match status" value="1"/>
</dbReference>
<dbReference type="PRINTS" id="PR01487">
    <property type="entry name" value="LUXSPROTEIN"/>
</dbReference>
<dbReference type="SUPFAM" id="SSF63411">
    <property type="entry name" value="LuxS/MPP-like metallohydrolase"/>
    <property type="match status" value="1"/>
</dbReference>
<name>LUXS_STRE4</name>
<feature type="chain" id="PRO_1000191039" description="S-ribosylhomocysteine lyase">
    <location>
        <begin position="1"/>
        <end position="161"/>
    </location>
</feature>
<feature type="binding site" evidence="1">
    <location>
        <position position="57"/>
    </location>
    <ligand>
        <name>Fe cation</name>
        <dbReference type="ChEBI" id="CHEBI:24875"/>
    </ligand>
</feature>
<feature type="binding site" evidence="1">
    <location>
        <position position="61"/>
    </location>
    <ligand>
        <name>Fe cation</name>
        <dbReference type="ChEBI" id="CHEBI:24875"/>
    </ligand>
</feature>
<feature type="binding site" evidence="1">
    <location>
        <position position="127"/>
    </location>
    <ligand>
        <name>Fe cation</name>
        <dbReference type="ChEBI" id="CHEBI:24875"/>
    </ligand>
</feature>
<accession>C0M785</accession>
<organism>
    <name type="scientific">Streptococcus equi subsp. equi (strain 4047)</name>
    <dbReference type="NCBI Taxonomy" id="553482"/>
    <lineage>
        <taxon>Bacteria</taxon>
        <taxon>Bacillati</taxon>
        <taxon>Bacillota</taxon>
        <taxon>Bacilli</taxon>
        <taxon>Lactobacillales</taxon>
        <taxon>Streptococcaceae</taxon>
        <taxon>Streptococcus</taxon>
    </lineage>
</organism>
<protein>
    <recommendedName>
        <fullName evidence="1">S-ribosylhomocysteine lyase</fullName>
        <ecNumber evidence="1">4.4.1.21</ecNumber>
    </recommendedName>
    <alternativeName>
        <fullName evidence="1">AI-2 synthesis protein</fullName>
    </alternativeName>
    <alternativeName>
        <fullName evidence="1">Autoinducer-2 production protein LuxS</fullName>
    </alternativeName>
</protein>
<evidence type="ECO:0000255" key="1">
    <source>
        <dbReference type="HAMAP-Rule" id="MF_00091"/>
    </source>
</evidence>
<keyword id="KW-0071">Autoinducer synthesis</keyword>
<keyword id="KW-0408">Iron</keyword>
<keyword id="KW-0456">Lyase</keyword>
<keyword id="KW-0479">Metal-binding</keyword>
<keyword id="KW-0673">Quorum sensing</keyword>
<gene>
    <name evidence="1" type="primary">luxS</name>
    <name type="ordered locus">SEQ_1782</name>
</gene>
<reference key="1">
    <citation type="journal article" date="2009" name="PLoS Pathog.">
        <title>Genomic evidence for the evolution of Streptococcus equi: host restriction, increased virulence, and genetic exchange with human pathogens.</title>
        <authorList>
            <person name="Holden M.T.G."/>
            <person name="Heather Z."/>
            <person name="Paillot R."/>
            <person name="Steward K.F."/>
            <person name="Webb K."/>
            <person name="Ainslie F."/>
            <person name="Jourdan T."/>
            <person name="Bason N.C."/>
            <person name="Holroyd N.E."/>
            <person name="Mungall K."/>
            <person name="Quail M.A."/>
            <person name="Sanders M."/>
            <person name="Simmonds M."/>
            <person name="Willey D."/>
            <person name="Brooks K."/>
            <person name="Aanensen D.M."/>
            <person name="Spratt B.G."/>
            <person name="Jolley K.A."/>
            <person name="Maiden M.C.J."/>
            <person name="Kehoe M."/>
            <person name="Chanter N."/>
            <person name="Bentley S.D."/>
            <person name="Robinson C."/>
            <person name="Maskell D.J."/>
            <person name="Parkhill J."/>
            <person name="Waller A.S."/>
        </authorList>
    </citation>
    <scope>NUCLEOTIDE SEQUENCE [LARGE SCALE GENOMIC DNA]</scope>
    <source>
        <strain>4047</strain>
    </source>
</reference>
<sequence length="161" mass="17991">MPKEVIVESFELDHTIVKAPYVRLISEEFGPQGDVITNFDVRLVQPNQAAIETAGLHTIEHLLAKLIRQRIDGMIDCSPFGCRTGFHLIMWGKHSSTDIAKIITSSLEEIATSITWEDVPGTTIESCGNYKDHSLFAAKEWAQLILKQGISDDPFNRHVTS</sequence>
<comment type="function">
    <text evidence="1">Involved in the synthesis of autoinducer 2 (AI-2) which is secreted by bacteria and is used to communicate both the cell density and the metabolic potential of the environment. The regulation of gene expression in response to changes in cell density is called quorum sensing. Catalyzes the transformation of S-ribosylhomocysteine (RHC) to homocysteine (HC) and 4,5-dihydroxy-2,3-pentadione (DPD).</text>
</comment>
<comment type="catalytic activity">
    <reaction evidence="1">
        <text>S-(5-deoxy-D-ribos-5-yl)-L-homocysteine = (S)-4,5-dihydroxypentane-2,3-dione + L-homocysteine</text>
        <dbReference type="Rhea" id="RHEA:17753"/>
        <dbReference type="ChEBI" id="CHEBI:29484"/>
        <dbReference type="ChEBI" id="CHEBI:58195"/>
        <dbReference type="ChEBI" id="CHEBI:58199"/>
        <dbReference type="EC" id="4.4.1.21"/>
    </reaction>
</comment>
<comment type="cofactor">
    <cofactor evidence="1">
        <name>Fe cation</name>
        <dbReference type="ChEBI" id="CHEBI:24875"/>
    </cofactor>
    <text evidence="1">Binds 1 Fe cation per subunit.</text>
</comment>
<comment type="subunit">
    <text evidence="1">Homodimer.</text>
</comment>
<comment type="similarity">
    <text evidence="1">Belongs to the LuxS family.</text>
</comment>
<proteinExistence type="inferred from homology"/>